<feature type="chain" id="PRO_0000364207" description="Small ribosomal subunit protein uS11">
    <location>
        <begin position="1"/>
        <end position="132"/>
    </location>
</feature>
<keyword id="KW-1185">Reference proteome</keyword>
<keyword id="KW-0687">Ribonucleoprotein</keyword>
<keyword id="KW-0689">Ribosomal protein</keyword>
<keyword id="KW-0694">RNA-binding</keyword>
<keyword id="KW-0699">rRNA-binding</keyword>
<reference key="1">
    <citation type="journal article" date="2008" name="Proc. Natl. Acad. Sci. U.S.A.">
        <title>A korarchaeal genome reveals new insights into the evolution of the Archaea.</title>
        <authorList>
            <person name="Elkins J.G."/>
            <person name="Podar M."/>
            <person name="Graham D.E."/>
            <person name="Makarova K.S."/>
            <person name="Wolf Y."/>
            <person name="Randau L."/>
            <person name="Hedlund B.P."/>
            <person name="Brochier-Armanet C."/>
            <person name="Kunin V."/>
            <person name="Anderson I."/>
            <person name="Lapidus A."/>
            <person name="Goltsman E."/>
            <person name="Barry K."/>
            <person name="Koonin E.V."/>
            <person name="Hugenholtz P."/>
            <person name="Kyrpides N."/>
            <person name="Wanner G."/>
            <person name="Richardson P."/>
            <person name="Keller M."/>
            <person name="Stetter K.O."/>
        </authorList>
    </citation>
    <scope>NUCLEOTIDE SEQUENCE [LARGE SCALE GENOMIC DNA]</scope>
    <source>
        <strain>OPF8</strain>
    </source>
</reference>
<organism>
    <name type="scientific">Korarchaeum cryptofilum (strain OPF8)</name>
    <dbReference type="NCBI Taxonomy" id="374847"/>
    <lineage>
        <taxon>Archaea</taxon>
        <taxon>Thermoproteota</taxon>
        <taxon>Candidatus Korarchaeia</taxon>
        <taxon>Candidatus Korarchaeales</taxon>
        <taxon>Candidatus Korarchaeaceae</taxon>
        <taxon>Candidatus Korarchaeum</taxon>
    </lineage>
</organism>
<sequence length="132" mass="14153">MSTERKGKIGVAHIYSSFNDTIVHITDITGAETLARYSGGMFVDADRLEGSPYAALKAAMAAAKEAQRKGITHLIVKVRAPGGIKSRIPGPGATAAIRGLSRSQLTLIRVEDVTPIPHDGCRRPHGRRGRRV</sequence>
<dbReference type="EMBL" id="CP000968">
    <property type="protein sequence ID" value="ACB08325.1"/>
    <property type="molecule type" value="Genomic_DNA"/>
</dbReference>
<dbReference type="SMR" id="B1L796"/>
<dbReference type="FunCoup" id="B1L796">
    <property type="interactions" value="166"/>
</dbReference>
<dbReference type="STRING" id="374847.Kcr_1580"/>
<dbReference type="EnsemblBacteria" id="ACB08325">
    <property type="protein sequence ID" value="ACB08325"/>
    <property type="gene ID" value="Kcr_1580"/>
</dbReference>
<dbReference type="KEGG" id="kcr:Kcr_1580"/>
<dbReference type="eggNOG" id="arCOG04240">
    <property type="taxonomic scope" value="Archaea"/>
</dbReference>
<dbReference type="HOGENOM" id="CLU_072439_6_0_2"/>
<dbReference type="InParanoid" id="B1L796"/>
<dbReference type="PhylomeDB" id="B1L796"/>
<dbReference type="Proteomes" id="UP000001686">
    <property type="component" value="Chromosome"/>
</dbReference>
<dbReference type="GO" id="GO:0022627">
    <property type="term" value="C:cytosolic small ribosomal subunit"/>
    <property type="evidence" value="ECO:0000318"/>
    <property type="project" value="GO_Central"/>
</dbReference>
<dbReference type="GO" id="GO:0019843">
    <property type="term" value="F:rRNA binding"/>
    <property type="evidence" value="ECO:0007669"/>
    <property type="project" value="UniProtKB-UniRule"/>
</dbReference>
<dbReference type="GO" id="GO:0003735">
    <property type="term" value="F:structural constituent of ribosome"/>
    <property type="evidence" value="ECO:0000318"/>
    <property type="project" value="GO_Central"/>
</dbReference>
<dbReference type="GO" id="GO:0006412">
    <property type="term" value="P:translation"/>
    <property type="evidence" value="ECO:0000318"/>
    <property type="project" value="GO_Central"/>
</dbReference>
<dbReference type="FunFam" id="3.30.420.80:FF:000007">
    <property type="entry name" value="30S ribosomal protein S11"/>
    <property type="match status" value="1"/>
</dbReference>
<dbReference type="Gene3D" id="3.30.420.80">
    <property type="entry name" value="Ribosomal protein S11"/>
    <property type="match status" value="1"/>
</dbReference>
<dbReference type="HAMAP" id="MF_01310">
    <property type="entry name" value="Ribosomal_uS11"/>
    <property type="match status" value="1"/>
</dbReference>
<dbReference type="InterPro" id="IPR001971">
    <property type="entry name" value="Ribosomal_uS11"/>
</dbReference>
<dbReference type="InterPro" id="IPR036967">
    <property type="entry name" value="Ribosomal_uS11_sf"/>
</dbReference>
<dbReference type="NCBIfam" id="NF007176">
    <property type="entry name" value="PRK09607.1"/>
    <property type="match status" value="1"/>
</dbReference>
<dbReference type="PANTHER" id="PTHR11759">
    <property type="entry name" value="40S RIBOSOMAL PROTEIN S14/30S RIBOSOMAL PROTEIN S11"/>
    <property type="match status" value="1"/>
</dbReference>
<dbReference type="Pfam" id="PF00411">
    <property type="entry name" value="Ribosomal_S11"/>
    <property type="match status" value="1"/>
</dbReference>
<dbReference type="PIRSF" id="PIRSF002131">
    <property type="entry name" value="Ribosomal_S11"/>
    <property type="match status" value="1"/>
</dbReference>
<dbReference type="SUPFAM" id="SSF53137">
    <property type="entry name" value="Translational machinery components"/>
    <property type="match status" value="1"/>
</dbReference>
<protein>
    <recommendedName>
        <fullName evidence="2">Small ribosomal subunit protein uS11</fullName>
    </recommendedName>
    <alternativeName>
        <fullName>30S ribosomal protein S11</fullName>
    </alternativeName>
</protein>
<name>RS11_KORCO</name>
<comment type="function">
    <text evidence="1">Located on the platform of the 30S subunit.</text>
</comment>
<comment type="subunit">
    <text evidence="1">Part of the 30S ribosomal subunit.</text>
</comment>
<comment type="similarity">
    <text evidence="2">Belongs to the universal ribosomal protein uS11 family.</text>
</comment>
<evidence type="ECO:0000250" key="1"/>
<evidence type="ECO:0000305" key="2"/>
<accession>B1L796</accession>
<proteinExistence type="inferred from homology"/>
<gene>
    <name type="primary">rps11</name>
    <name type="ordered locus">Kcr_1580</name>
</gene>